<organism>
    <name type="scientific">Burkholderia mallei (strain ATCC 23344)</name>
    <dbReference type="NCBI Taxonomy" id="243160"/>
    <lineage>
        <taxon>Bacteria</taxon>
        <taxon>Pseudomonadati</taxon>
        <taxon>Pseudomonadota</taxon>
        <taxon>Betaproteobacteria</taxon>
        <taxon>Burkholderiales</taxon>
        <taxon>Burkholderiaceae</taxon>
        <taxon>Burkholderia</taxon>
        <taxon>pseudomallei group</taxon>
    </lineage>
</organism>
<comment type="function">
    <text evidence="1">Catalyzes a cyclopropane ring-opening reaction, the irreversible conversion of 1-aminocyclopropane-1-carboxylate (ACC) to ammonia and alpha-ketobutyrate. Allows growth on ACC as a nitrogen source.</text>
</comment>
<comment type="catalytic activity">
    <reaction evidence="1">
        <text>1-aminocyclopropane-1-carboxylate + H2O = 2-oxobutanoate + NH4(+)</text>
        <dbReference type="Rhea" id="RHEA:16933"/>
        <dbReference type="ChEBI" id="CHEBI:15377"/>
        <dbReference type="ChEBI" id="CHEBI:16763"/>
        <dbReference type="ChEBI" id="CHEBI:28938"/>
        <dbReference type="ChEBI" id="CHEBI:58360"/>
        <dbReference type="EC" id="3.5.99.7"/>
    </reaction>
</comment>
<comment type="cofactor">
    <cofactor evidence="1">
        <name>pyridoxal 5'-phosphate</name>
        <dbReference type="ChEBI" id="CHEBI:597326"/>
    </cofactor>
</comment>
<comment type="subunit">
    <text evidence="1">Homotrimer.</text>
</comment>
<comment type="similarity">
    <text evidence="1">Belongs to the ACC deaminase/D-cysteine desulfhydrase family.</text>
</comment>
<accession>Q62CE3</accession>
<keyword id="KW-0378">Hydrolase</keyword>
<keyword id="KW-0663">Pyridoxal phosphate</keyword>
<keyword id="KW-1185">Reference proteome</keyword>
<name>1A1D_BURMA</name>
<dbReference type="EC" id="3.5.99.7" evidence="1"/>
<dbReference type="EMBL" id="CP000011">
    <property type="protein sequence ID" value="AAU46138.1"/>
    <property type="molecule type" value="Genomic_DNA"/>
</dbReference>
<dbReference type="RefSeq" id="WP_004184549.1">
    <property type="nucleotide sequence ID" value="NC_006349.2"/>
</dbReference>
<dbReference type="RefSeq" id="YP_105635.1">
    <property type="nucleotide sequence ID" value="NC_006349.2"/>
</dbReference>
<dbReference type="SMR" id="Q62CE3"/>
<dbReference type="KEGG" id="bma:BMAA0952"/>
<dbReference type="PATRIC" id="fig|243160.12.peg.4473"/>
<dbReference type="eggNOG" id="COG2515">
    <property type="taxonomic scope" value="Bacteria"/>
</dbReference>
<dbReference type="HOGENOM" id="CLU_048897_2_1_4"/>
<dbReference type="Proteomes" id="UP000006693">
    <property type="component" value="Chromosome 2"/>
</dbReference>
<dbReference type="GO" id="GO:0008660">
    <property type="term" value="F:1-aminocyclopropane-1-carboxylate deaminase activity"/>
    <property type="evidence" value="ECO:0007669"/>
    <property type="project" value="UniProtKB-UniRule"/>
</dbReference>
<dbReference type="GO" id="GO:0019148">
    <property type="term" value="F:D-cysteine desulfhydrase activity"/>
    <property type="evidence" value="ECO:0007669"/>
    <property type="project" value="TreeGrafter"/>
</dbReference>
<dbReference type="GO" id="GO:0030170">
    <property type="term" value="F:pyridoxal phosphate binding"/>
    <property type="evidence" value="ECO:0007669"/>
    <property type="project" value="InterPro"/>
</dbReference>
<dbReference type="GO" id="GO:0018871">
    <property type="term" value="P:1-aminocyclopropane-1-carboxylate metabolic process"/>
    <property type="evidence" value="ECO:0007669"/>
    <property type="project" value="UniProtKB-UniRule"/>
</dbReference>
<dbReference type="GO" id="GO:0009310">
    <property type="term" value="P:amine catabolic process"/>
    <property type="evidence" value="ECO:0007669"/>
    <property type="project" value="InterPro"/>
</dbReference>
<dbReference type="CDD" id="cd06449">
    <property type="entry name" value="ACCD"/>
    <property type="match status" value="1"/>
</dbReference>
<dbReference type="FunFam" id="3.40.50.1100:FF:000053">
    <property type="entry name" value="1-aminocyclopropane-1-carboxylate deaminase"/>
    <property type="match status" value="1"/>
</dbReference>
<dbReference type="Gene3D" id="3.40.50.1100">
    <property type="match status" value="2"/>
</dbReference>
<dbReference type="HAMAP" id="MF_00807">
    <property type="entry name" value="ACC_deaminase"/>
    <property type="match status" value="1"/>
</dbReference>
<dbReference type="InterPro" id="IPR027278">
    <property type="entry name" value="ACCD_DCysDesulf"/>
</dbReference>
<dbReference type="InterPro" id="IPR005965">
    <property type="entry name" value="ACP_carboxylate_deaminase"/>
</dbReference>
<dbReference type="InterPro" id="IPR020601">
    <property type="entry name" value="ACP_carboxylate_deaminase_bac"/>
</dbReference>
<dbReference type="InterPro" id="IPR001926">
    <property type="entry name" value="TrpB-like_PALP"/>
</dbReference>
<dbReference type="InterPro" id="IPR036052">
    <property type="entry name" value="TrpB-like_PALP_sf"/>
</dbReference>
<dbReference type="NCBIfam" id="TIGR01274">
    <property type="entry name" value="ACC_deam"/>
    <property type="match status" value="1"/>
</dbReference>
<dbReference type="PANTHER" id="PTHR43780">
    <property type="entry name" value="1-AMINOCYCLOPROPANE-1-CARBOXYLATE DEAMINASE-RELATED"/>
    <property type="match status" value="1"/>
</dbReference>
<dbReference type="PANTHER" id="PTHR43780:SF2">
    <property type="entry name" value="1-AMINOCYCLOPROPANE-1-CARBOXYLATE DEAMINASE-RELATED"/>
    <property type="match status" value="1"/>
</dbReference>
<dbReference type="Pfam" id="PF00291">
    <property type="entry name" value="PALP"/>
    <property type="match status" value="1"/>
</dbReference>
<dbReference type="PIRSF" id="PIRSF006278">
    <property type="entry name" value="ACCD_DCysDesulf"/>
    <property type="match status" value="1"/>
</dbReference>
<dbReference type="SUPFAM" id="SSF53686">
    <property type="entry name" value="Tryptophan synthase beta subunit-like PLP-dependent enzymes"/>
    <property type="match status" value="1"/>
</dbReference>
<gene>
    <name evidence="1" type="primary">acdS</name>
    <name type="ordered locus">BMAA0952</name>
</gene>
<proteinExistence type="inferred from homology"/>
<evidence type="ECO:0000255" key="1">
    <source>
        <dbReference type="HAMAP-Rule" id="MF_00807"/>
    </source>
</evidence>
<feature type="chain" id="PRO_0000184498" description="1-aminocyclopropane-1-carboxylate deaminase">
    <location>
        <begin position="1"/>
        <end position="338"/>
    </location>
</feature>
<feature type="active site" description="Nucleophile" evidence="1">
    <location>
        <position position="78"/>
    </location>
</feature>
<feature type="modified residue" description="N6-(pyridoxal phosphate)lysine" evidence="1">
    <location>
        <position position="51"/>
    </location>
</feature>
<sequence length="338" mass="36481">MNLQKFSRYPLTFGPTPIQPLKRLSAHLGGKVELYAKRDDCNSGLAFGGNKTRKLEYLIPDALAQGCDTLVSIGGIQSNQTRQVAAVAAHLGMKCVLVQENWVNYHDAVYDRVGNIQMSRMMGADVRLVPDGFDIGFRKSWEDALADVRARGGKPYAIPAGCSDHPLGGLGFVGFAEEVRAQEAELGFQFDYVVVCSVTGSTQAGMVVGFAADGRADRVIGVDASAKPAQTREQILRIAKHTADRVELGRDITSADVVLDERFGGPEYGLPNEGTLEAIRLCAKLEGVLTDPVYEGKSMHGMIEKVRLGEFPAGSKVLYAHLGGVPALNAYSFLFRDG</sequence>
<reference key="1">
    <citation type="journal article" date="2004" name="Proc. Natl. Acad. Sci. U.S.A.">
        <title>Structural flexibility in the Burkholderia mallei genome.</title>
        <authorList>
            <person name="Nierman W.C."/>
            <person name="DeShazer D."/>
            <person name="Kim H.S."/>
            <person name="Tettelin H."/>
            <person name="Nelson K.E."/>
            <person name="Feldblyum T.V."/>
            <person name="Ulrich R.L."/>
            <person name="Ronning C.M."/>
            <person name="Brinkac L.M."/>
            <person name="Daugherty S.C."/>
            <person name="Davidsen T.D."/>
            <person name="DeBoy R.T."/>
            <person name="Dimitrov G."/>
            <person name="Dodson R.J."/>
            <person name="Durkin A.S."/>
            <person name="Gwinn M.L."/>
            <person name="Haft D.H."/>
            <person name="Khouri H.M."/>
            <person name="Kolonay J.F."/>
            <person name="Madupu R."/>
            <person name="Mohammoud Y."/>
            <person name="Nelson W.C."/>
            <person name="Radune D."/>
            <person name="Romero C.M."/>
            <person name="Sarria S."/>
            <person name="Selengut J."/>
            <person name="Shamblin C."/>
            <person name="Sullivan S.A."/>
            <person name="White O."/>
            <person name="Yu Y."/>
            <person name="Zafar N."/>
            <person name="Zhou L."/>
            <person name="Fraser C.M."/>
        </authorList>
    </citation>
    <scope>NUCLEOTIDE SEQUENCE [LARGE SCALE GENOMIC DNA]</scope>
    <source>
        <strain>ATCC 23344</strain>
    </source>
</reference>
<protein>
    <recommendedName>
        <fullName evidence="1">1-aminocyclopropane-1-carboxylate deaminase</fullName>
        <shortName evidence="1">ACC deaminase</shortName>
        <shortName evidence="1">ACCD</shortName>
        <ecNumber evidence="1">3.5.99.7</ecNumber>
    </recommendedName>
</protein>